<keyword id="KW-0456">Lyase</keyword>
<keyword id="KW-0585">Phenylalanine catabolism</keyword>
<sequence length="727" mass="78360">MPITHEQPNGFHSKQLNGSGIAKAKAMPYPSDLLSHFVKQHLELESYKNGQEIEIDGYSLSISAVSAAARYNAPVILRDSSTIRDRLEKARSVIVEKIEGSKSVYGVSTGFGGSADTRTSNTLALGNALLQHQHSGVLPSTTNTLSVLPLLDPIASTSMPESWVRGAILIRINSLIRGHSGVRWELIAKMVELLQANITPLVPLRGSISASGDLSPLSYVAGTLMGNPSIRVFDGPAAFGARQIVSSVKALEEHNITPISLLAKEHLGILNGTAFSASVASLVLSDVTHLAMLAQVCTAMGTEVLLGERMNYAPFIHAVARPHPGQTEAARTIWDLLSGSKLAHGHEEEVTIDQDQGELRQDRYPLRTAPQFLGPQIEDILSALNTVTLECNSTTDNPLIDGETGDIHHGGNFQAMSVSNAMEKTRLSLHHIGKLLFAQCAELVHPDMNRGLPPSLAATDPSINYHGKGIDIGIAAYVSELGYLANPVSTHIQSAELHNQAVNSLALISARATINSLEVLSLLTSSYLYMLCQAYDLRALQADFRQGLAEIVQEELRAHFSAHIESLDESPLFDKVISSMYKELNHTTTMDAVPRMVKVAGASTSLLVDFFMANQTSDAMSVAALTALPKFRETVALRAAAKLVALREEYLLGARGPAPASAWLGRTRPIYEFIRVTLGIRMHGTENLGVFQQGLGVQDVTIGQNVSLIHEAIRDGKMRGVVVGLFA</sequence>
<accession>A0A384XHA3</accession>
<dbReference type="EC" id="4.3.1.24" evidence="12"/>
<dbReference type="EMBL" id="KY070339">
    <property type="protein sequence ID" value="ATV82120.1"/>
    <property type="molecule type" value="Genomic_DNA"/>
</dbReference>
<dbReference type="SMR" id="A0A384XHA3"/>
<dbReference type="GO" id="GO:0005737">
    <property type="term" value="C:cytoplasm"/>
    <property type="evidence" value="ECO:0007669"/>
    <property type="project" value="InterPro"/>
</dbReference>
<dbReference type="GO" id="GO:0045548">
    <property type="term" value="F:phenylalanine ammonia-lyase activity"/>
    <property type="evidence" value="ECO:0007669"/>
    <property type="project" value="UniProtKB-EC"/>
</dbReference>
<dbReference type="GO" id="GO:0006559">
    <property type="term" value="P:L-phenylalanine catabolic process"/>
    <property type="evidence" value="ECO:0007669"/>
    <property type="project" value="UniProtKB-KW"/>
</dbReference>
<dbReference type="CDD" id="cd00332">
    <property type="entry name" value="PAL-HAL"/>
    <property type="match status" value="1"/>
</dbReference>
<dbReference type="Gene3D" id="1.20.200.10">
    <property type="entry name" value="Fumarase/aspartase (Central domain)"/>
    <property type="match status" value="1"/>
</dbReference>
<dbReference type="Gene3D" id="1.10.275.10">
    <property type="entry name" value="Fumarase/aspartase (N-terminal domain)"/>
    <property type="match status" value="1"/>
</dbReference>
<dbReference type="Gene3D" id="1.10.274.20">
    <property type="entry name" value="Phenylalanine ammonia-lyase 1, domain 3"/>
    <property type="match status" value="1"/>
</dbReference>
<dbReference type="InterPro" id="IPR001106">
    <property type="entry name" value="Aromatic_Lyase"/>
</dbReference>
<dbReference type="InterPro" id="IPR024083">
    <property type="entry name" value="Fumarase/histidase_N"/>
</dbReference>
<dbReference type="InterPro" id="IPR008948">
    <property type="entry name" value="L-Aspartase-like"/>
</dbReference>
<dbReference type="InterPro" id="IPR022313">
    <property type="entry name" value="Phe/His_NH3-lyase_AS"/>
</dbReference>
<dbReference type="InterPro" id="IPR005922">
    <property type="entry name" value="Phe_NH3-lyase"/>
</dbReference>
<dbReference type="InterPro" id="IPR023144">
    <property type="entry name" value="Phe_NH3-lyase_shielding_dom_sf"/>
</dbReference>
<dbReference type="NCBIfam" id="TIGR01226">
    <property type="entry name" value="phe_am_lyase"/>
    <property type="match status" value="1"/>
</dbReference>
<dbReference type="PANTHER" id="PTHR10362">
    <property type="entry name" value="HISTIDINE AMMONIA-LYASE"/>
    <property type="match status" value="1"/>
</dbReference>
<dbReference type="Pfam" id="PF00221">
    <property type="entry name" value="Lyase_aromatic"/>
    <property type="match status" value="1"/>
</dbReference>
<dbReference type="SUPFAM" id="SSF48557">
    <property type="entry name" value="L-aspartase-like"/>
    <property type="match status" value="1"/>
</dbReference>
<dbReference type="PROSITE" id="PS00488">
    <property type="entry name" value="PAL_HISTIDASE"/>
    <property type="match status" value="1"/>
</dbReference>
<feature type="chain" id="PRO_0000449346" description="Phenylalanine ammonia-lyase str11">
    <location>
        <begin position="1"/>
        <end position="727"/>
    </location>
</feature>
<feature type="active site" description="Proton donor/acceptor" evidence="2">
    <location>
        <position position="105"/>
    </location>
</feature>
<feature type="binding site" evidence="2">
    <location>
        <position position="271"/>
    </location>
    <ligand>
        <name>(E)-cinnamate</name>
        <dbReference type="ChEBI" id="CHEBI:15669"/>
    </ligand>
</feature>
<feature type="binding site" evidence="2">
    <location>
        <position position="361"/>
    </location>
    <ligand>
        <name>(E)-cinnamate</name>
        <dbReference type="ChEBI" id="CHEBI:15669"/>
    </ligand>
</feature>
<feature type="binding site" evidence="2">
    <location>
        <position position="367"/>
    </location>
    <ligand>
        <name>(E)-cinnamate</name>
        <dbReference type="ChEBI" id="CHEBI:15669"/>
    </ligand>
</feature>
<feature type="binding site" evidence="2">
    <location>
        <position position="397"/>
    </location>
    <ligand>
        <name>(E)-cinnamate</name>
        <dbReference type="ChEBI" id="CHEBI:15669"/>
    </ligand>
</feature>
<feature type="binding site" evidence="1">
    <location>
        <position position="468"/>
    </location>
    <ligand>
        <name>(E)-cinnamate</name>
        <dbReference type="ChEBI" id="CHEBI:15669"/>
    </ligand>
</feature>
<feature type="binding site" evidence="1">
    <location>
        <position position="496"/>
    </location>
    <ligand>
        <name>(E)-cinnamate</name>
        <dbReference type="ChEBI" id="CHEBI:15669"/>
    </ligand>
</feature>
<feature type="binding site" evidence="2">
    <location>
        <position position="499"/>
    </location>
    <ligand>
        <name>(E)-cinnamate</name>
        <dbReference type="ChEBI" id="CHEBI:15669"/>
    </ligand>
</feature>
<feature type="modified residue" description="2,3-didehydroalanine (Ser)" evidence="3">
    <location>
        <position position="211"/>
    </location>
</feature>
<feature type="cross-link" description="5-imidazolinone (Ala-Gly)" evidence="2">
    <location>
        <begin position="210"/>
        <end position="212"/>
    </location>
</feature>
<gene>
    <name evidence="10" type="primary">str11</name>
</gene>
<proteinExistence type="evidence at protein level"/>
<organism>
    <name type="scientific">Strobilurus tenacellus</name>
    <dbReference type="NCBI Taxonomy" id="41251"/>
    <lineage>
        <taxon>Eukaryota</taxon>
        <taxon>Fungi</taxon>
        <taxon>Dikarya</taxon>
        <taxon>Basidiomycota</taxon>
        <taxon>Agaricomycotina</taxon>
        <taxon>Agaricomycetes</taxon>
        <taxon>Agaricomycetidae</taxon>
        <taxon>Agaricales</taxon>
        <taxon>Marasmiineae</taxon>
        <taxon>Physalacriaceae</taxon>
        <taxon>Strobilurus</taxon>
    </lineage>
</organism>
<evidence type="ECO:0000250" key="1">
    <source>
        <dbReference type="UniProtKB" id="P11544"/>
    </source>
</evidence>
<evidence type="ECO:0000250" key="2">
    <source>
        <dbReference type="UniProtKB" id="Q68G84"/>
    </source>
</evidence>
<evidence type="ECO:0000255" key="3">
    <source>
        <dbReference type="PROSITE-ProRule" id="PRU10122"/>
    </source>
</evidence>
<evidence type="ECO:0000255" key="4">
    <source>
        <dbReference type="RuleBase" id="RU003955"/>
    </source>
</evidence>
<evidence type="ECO:0000269" key="5">
    <source>
    </source>
</evidence>
<evidence type="ECO:0000269" key="6">
    <source>
    </source>
</evidence>
<evidence type="ECO:0000269" key="7">
    <source>
    </source>
</evidence>
<evidence type="ECO:0000303" key="8">
    <source>
    </source>
</evidence>
<evidence type="ECO:0000303" key="9">
    <source>
    </source>
</evidence>
<evidence type="ECO:0000303" key="10">
    <source>
    </source>
</evidence>
<evidence type="ECO:0000305" key="11"/>
<evidence type="ECO:0000305" key="12">
    <source>
    </source>
</evidence>
<reference key="1">
    <citation type="journal article" date="2018" name="Nat. Commun.">
        <title>Strobilurin biosynthesis in Basidiomycete fungi.</title>
        <authorList>
            <person name="Nofiani R."/>
            <person name="de Mattos-Shipley K."/>
            <person name="Lebe K.E."/>
            <person name="Han L.C."/>
            <person name="Iqbal Z."/>
            <person name="Bailey A.M."/>
            <person name="Willis C.L."/>
            <person name="Simpson T.J."/>
            <person name="Cox R.J."/>
        </authorList>
    </citation>
    <scope>NUCLEOTIDE SEQUENCE [GENOMIC DNA]</scope>
    <scope>FUNCTION</scope>
    <scope>PATHWAY</scope>
    <scope>BIOTECHNOLOGY</scope>
    <source>
        <strain>CBS 621.79</strain>
    </source>
</reference>
<reference key="2">
    <citation type="journal article" date="1977" name="J. Antibiot.">
        <title>The strobilurins--new antifungal antibiotics from the basidiomycete Strobilurus tenacellus.</title>
        <authorList>
            <person name="Anke T."/>
            <person name="Oberwinkler F."/>
            <person name="Steglich W."/>
            <person name="Schramm G."/>
        </authorList>
    </citation>
    <scope>BIOTECHNOLOGY</scope>
</reference>
<reference key="3">
    <citation type="journal article" date="1981" name="FEBS Lett.">
        <title>Oudemansin, strobilurin A, strobilurin B and myxothiazol: new inhibitors of the bc1 segment of the respiratory chain with an E-beta-methoxyacrylate system as common structural element.</title>
        <authorList>
            <person name="Becker W.F."/>
            <person name="von Jagow G."/>
            <person name="Anke T."/>
            <person name="Steglich W."/>
        </authorList>
    </citation>
    <scope>BIOTECHNOLOGY</scope>
</reference>
<reference key="4">
    <citation type="journal article" date="1999" name="Angew. Chem. Int. Ed.">
        <title>Strobilurins: evolution of a new class of active substances.</title>
        <authorList>
            <person name="Sauter H."/>
            <person name="Steglich W."/>
            <person name="Anke T."/>
        </authorList>
    </citation>
    <scope>REVIEW ON BIOTECHNOLOGY</scope>
</reference>
<reference key="5">
    <citation type="journal article" date="2002" name="Pest Manag. Sci.">
        <title>The strobilurin fungicides.</title>
        <authorList>
            <person name="Bartlett D.W."/>
            <person name="Clough J.M."/>
            <person name="Godwin J.R."/>
            <person name="Hall A.A."/>
            <person name="Hamer M."/>
            <person name="Parr-Dobrzanski B."/>
        </authorList>
    </citation>
    <scope>REVIEW ON BIOTECHNOLOGY</scope>
</reference>
<comment type="function">
    <text evidence="5 12">Phenylalanine ammonia-lyase; part of the gene cluster that mediates the biosynthesis of strobilurin A, an antifungal polyketide that contains a key beta-methoxyacrylate toxophore that targets the complex III of the mitochondrial electron transport chain (PubMed:30258052). Strobilurin biosynthesis begins with construction of benzoyl CoA by step-wise elimination of ammonia from phenylalanine by the phenylalanine ammonia-lyase str11, oxygenation by str8 and retro-Claisen reaction to form benzoic acid, which is activated to its CoA thiolester benzoyl CoA by the dedicated CoA ligase str10 (PubMed:30258052). Benzoyl CoA forms the starter unit for the highly reducing polyketide synthase stpks1 that produces the polyketide prestrobilutin A (PubMed:30258052). The FAD-dependent oxygenase str9 then catalyzes the key oxidative rearrangement responsible for the creation of the beta-methoxyacrylate toxophore (PubMed:30258052). Str9 performs epoxidation of the 2,3 olefin of prestrobilutin A, followed by Meinwald rearrangement to furnish the aldehyde intermediate (Probable). Rapid enolization of the aldehyde intermediate would give the beta-methoxyacrylate skeleton and methylations catalyzed by str2 and str3 complete the synthesis and lead to the production of strobilurin A (Probable). The short-chain dehydrogenase stl2 and the dehydrogenase str4 play a role in the shunt pathway leading to the production of bolineol (PubMed:30258052). The cluster encodes no obvious halogenase gene that could be involved in production of strobilurin B, nor any obvious dimethylallyl-transferase that could be involved in the production of strobilurin G (Probable). It is possible that unknown proteins encoded in, or near, the cluster (such as str1 or stl1) may form new classes of halogenases or dimethylally-transferases, or that the responsible genes are located elsewhere on the genome (Probable). Similarly, proteins encoded by str5/str6 hydrolases appear to have no chemical role in the biosynthesis of strobilurin A (Probable). Finally, no obvious self-resistance gene is found within the cluster (Probable).</text>
</comment>
<comment type="catalytic activity">
    <reaction evidence="4">
        <text>L-phenylalanine = (E)-cinnamate + NH4(+)</text>
        <dbReference type="Rhea" id="RHEA:21384"/>
        <dbReference type="ChEBI" id="CHEBI:15669"/>
        <dbReference type="ChEBI" id="CHEBI:28938"/>
        <dbReference type="ChEBI" id="CHEBI:58095"/>
        <dbReference type="EC" id="4.3.1.24"/>
    </reaction>
</comment>
<comment type="pathway">
    <text evidence="5">Mycotoxin biosynthesis.</text>
</comment>
<comment type="PTM">
    <text evidence="2">Contains an active site 4-methylidene-imidazol-5-one (MIO), which is formed autocatalytically by cyclization and dehydration of residues Ala-Ser-Gly.</text>
</comment>
<comment type="biotechnology">
    <text evidence="6 7 8 9 10">The structure of strobilurin A was used for the development of the major class of beta-methoxyacrylate agricultural fungicides since its beta-methoxyacrylate toxophore targets the Qo site of complex III of the mitochondrial electron transport chain and prevents adenosine triphosphate synthesis (PubMed:563391, PubMed:6271595). Compounds such as azoxystrobin (Syngenta) and Kresoxim methyl (BASF) are among the most widely used fungicides worldwide (PubMed:12146165, PubMed:29711574). This class of antifungals are used as effective treatments against a broad range of destructive fungal plant pathogens and make significant contributions to food security (PubMed:12146165, PubMed:29711574). The strobilurin fungicides are estimated to have been worth 3.4 billion dollars in 2015 and they make up 25% of the fungicide market and 6.7% of the total crop protection market (PubMed:30258052).</text>
</comment>
<comment type="similarity">
    <text evidence="11">Belongs to the PAL/histidase family.</text>
</comment>
<protein>
    <recommendedName>
        <fullName evidence="10">Phenylalanine ammonia-lyase str11</fullName>
        <shortName evidence="10">PAL</shortName>
        <ecNumber evidence="12">4.3.1.24</ecNumber>
    </recommendedName>
    <alternativeName>
        <fullName evidence="10">Strobilurin biosynthesis cluster protein r11</fullName>
    </alternativeName>
</protein>
<name>STR11_STRTC</name>